<dbReference type="EC" id="2.2.1.2" evidence="2"/>
<dbReference type="EMBL" id="CP000949">
    <property type="protein sequence ID" value="ACA72190.1"/>
    <property type="molecule type" value="Genomic_DNA"/>
</dbReference>
<dbReference type="SMR" id="B1J623"/>
<dbReference type="STRING" id="390235.PputW619_1685"/>
<dbReference type="KEGG" id="ppw:PputW619_1685"/>
<dbReference type="eggNOG" id="COG0176">
    <property type="taxonomic scope" value="Bacteria"/>
</dbReference>
<dbReference type="HOGENOM" id="CLU_047470_0_1_6"/>
<dbReference type="OrthoDB" id="9809101at2"/>
<dbReference type="UniPathway" id="UPA00115">
    <property type="reaction ID" value="UER00414"/>
</dbReference>
<dbReference type="GO" id="GO:0005829">
    <property type="term" value="C:cytosol"/>
    <property type="evidence" value="ECO:0007669"/>
    <property type="project" value="TreeGrafter"/>
</dbReference>
<dbReference type="GO" id="GO:0004801">
    <property type="term" value="F:transaldolase activity"/>
    <property type="evidence" value="ECO:0000250"/>
    <property type="project" value="UniProtKB"/>
</dbReference>
<dbReference type="GO" id="GO:0005975">
    <property type="term" value="P:carbohydrate metabolic process"/>
    <property type="evidence" value="ECO:0007669"/>
    <property type="project" value="InterPro"/>
</dbReference>
<dbReference type="GO" id="GO:0006098">
    <property type="term" value="P:pentose-phosphate shunt"/>
    <property type="evidence" value="ECO:0007669"/>
    <property type="project" value="UniProtKB-UniRule"/>
</dbReference>
<dbReference type="CDD" id="cd00957">
    <property type="entry name" value="Transaldolase_TalAB"/>
    <property type="match status" value="1"/>
</dbReference>
<dbReference type="FunFam" id="3.20.20.70:FF:000002">
    <property type="entry name" value="Transaldolase"/>
    <property type="match status" value="1"/>
</dbReference>
<dbReference type="Gene3D" id="3.20.20.70">
    <property type="entry name" value="Aldolase class I"/>
    <property type="match status" value="1"/>
</dbReference>
<dbReference type="HAMAP" id="MF_00492">
    <property type="entry name" value="Transaldolase_1"/>
    <property type="match status" value="1"/>
</dbReference>
<dbReference type="InterPro" id="IPR013785">
    <property type="entry name" value="Aldolase_TIM"/>
</dbReference>
<dbReference type="InterPro" id="IPR001585">
    <property type="entry name" value="TAL/FSA"/>
</dbReference>
<dbReference type="InterPro" id="IPR004730">
    <property type="entry name" value="Transaldolase_1"/>
</dbReference>
<dbReference type="InterPro" id="IPR018225">
    <property type="entry name" value="Transaldolase_AS"/>
</dbReference>
<dbReference type="NCBIfam" id="NF009001">
    <property type="entry name" value="PRK12346.1"/>
    <property type="match status" value="1"/>
</dbReference>
<dbReference type="NCBIfam" id="TIGR00874">
    <property type="entry name" value="talAB"/>
    <property type="match status" value="1"/>
</dbReference>
<dbReference type="PANTHER" id="PTHR10683">
    <property type="entry name" value="TRANSALDOLASE"/>
    <property type="match status" value="1"/>
</dbReference>
<dbReference type="PANTHER" id="PTHR10683:SF18">
    <property type="entry name" value="TRANSALDOLASE"/>
    <property type="match status" value="1"/>
</dbReference>
<dbReference type="Pfam" id="PF00923">
    <property type="entry name" value="TAL_FSA"/>
    <property type="match status" value="1"/>
</dbReference>
<dbReference type="SUPFAM" id="SSF51569">
    <property type="entry name" value="Aldolase"/>
    <property type="match status" value="1"/>
</dbReference>
<dbReference type="PROSITE" id="PS01054">
    <property type="entry name" value="TRANSALDOLASE_1"/>
    <property type="match status" value="1"/>
</dbReference>
<dbReference type="PROSITE" id="PS00958">
    <property type="entry name" value="TRANSALDOLASE_2"/>
    <property type="match status" value="1"/>
</dbReference>
<sequence length="308" mass="33596">MTSKLEQLKQFTTVVADTGDLDAITRLKPVDATTNPSLLLKAAAIPGYADLLKQVKSDAKGNVDLACDKFAVAVGAGILKVIPGRISTEVDARLSFDEPALLSKARQLIELYQAAGIPKDRVLIKLASTWEGIRAAEQLEKEGIQTNLTLLFSFAQAQACADAGVFLISPFVGRIYDWYKKSTGQEYVGANDPGVQSVTRIYNYYKANGYNTVVMGASFRNIGQIEQLAGCDRLTISPELLQQLSDDQGELPQVLKPGDAGEAKQVLSESQFRWAMNEDAMGTEKLAEGIRQFARDQEKLEKLMADKA</sequence>
<protein>
    <recommendedName>
        <fullName evidence="2">Transaldolase</fullName>
        <ecNumber evidence="2">2.2.1.2</ecNumber>
    </recommendedName>
</protein>
<reference key="1">
    <citation type="submission" date="2008-02" db="EMBL/GenBank/DDBJ databases">
        <title>Complete sequence of Pseudomonas putida W619.</title>
        <authorList>
            <person name="Copeland A."/>
            <person name="Lucas S."/>
            <person name="Lapidus A."/>
            <person name="Barry K."/>
            <person name="Detter J.C."/>
            <person name="Glavina del Rio T."/>
            <person name="Dalin E."/>
            <person name="Tice H."/>
            <person name="Pitluck S."/>
            <person name="Chain P."/>
            <person name="Malfatti S."/>
            <person name="Shin M."/>
            <person name="Vergez L."/>
            <person name="Schmutz J."/>
            <person name="Larimer F."/>
            <person name="Land M."/>
            <person name="Hauser L."/>
            <person name="Kyrpides N."/>
            <person name="Kim E."/>
            <person name="Taghavi S."/>
            <person name="Vangronsveld D."/>
            <person name="van der Lelie D."/>
            <person name="Richardson P."/>
        </authorList>
    </citation>
    <scope>NUCLEOTIDE SEQUENCE [LARGE SCALE GENOMIC DNA]</scope>
    <source>
        <strain>W619</strain>
    </source>
</reference>
<keyword id="KW-0963">Cytoplasm</keyword>
<keyword id="KW-0570">Pentose shunt</keyword>
<keyword id="KW-0704">Schiff base</keyword>
<keyword id="KW-0808">Transferase</keyword>
<accession>B1J623</accession>
<comment type="function">
    <text evidence="2">Transaldolase is important for the balance of metabolites in the pentose-phosphate pathway.</text>
</comment>
<comment type="catalytic activity">
    <reaction evidence="2">
        <text>D-sedoheptulose 7-phosphate + D-glyceraldehyde 3-phosphate = D-erythrose 4-phosphate + beta-D-fructose 6-phosphate</text>
        <dbReference type="Rhea" id="RHEA:17053"/>
        <dbReference type="ChEBI" id="CHEBI:16897"/>
        <dbReference type="ChEBI" id="CHEBI:57483"/>
        <dbReference type="ChEBI" id="CHEBI:57634"/>
        <dbReference type="ChEBI" id="CHEBI:59776"/>
        <dbReference type="EC" id="2.2.1.2"/>
    </reaction>
</comment>
<comment type="pathway">
    <text evidence="2">Carbohydrate degradation; pentose phosphate pathway; D-glyceraldehyde 3-phosphate and beta-D-fructose 6-phosphate from D-ribose 5-phosphate and D-xylulose 5-phosphate (non-oxidative stage): step 2/3.</text>
</comment>
<comment type="subunit">
    <text evidence="1">Homodimer.</text>
</comment>
<comment type="subcellular location">
    <subcellularLocation>
        <location evidence="2">Cytoplasm</location>
    </subcellularLocation>
</comment>
<comment type="similarity">
    <text evidence="2">Belongs to the transaldolase family. Type 1 subfamily.</text>
</comment>
<organism>
    <name type="scientific">Pseudomonas putida (strain W619)</name>
    <dbReference type="NCBI Taxonomy" id="390235"/>
    <lineage>
        <taxon>Bacteria</taxon>
        <taxon>Pseudomonadati</taxon>
        <taxon>Pseudomonadota</taxon>
        <taxon>Gammaproteobacteria</taxon>
        <taxon>Pseudomonadales</taxon>
        <taxon>Pseudomonadaceae</taxon>
        <taxon>Pseudomonas</taxon>
    </lineage>
</organism>
<proteinExistence type="inferred from homology"/>
<feature type="chain" id="PRO_1000126252" description="Transaldolase">
    <location>
        <begin position="1"/>
        <end position="308"/>
    </location>
</feature>
<feature type="active site" description="Schiff-base intermediate with substrate" evidence="2">
    <location>
        <position position="125"/>
    </location>
</feature>
<name>TAL_PSEPW</name>
<evidence type="ECO:0000250" key="1"/>
<evidence type="ECO:0000255" key="2">
    <source>
        <dbReference type="HAMAP-Rule" id="MF_00492"/>
    </source>
</evidence>
<gene>
    <name evidence="2" type="primary">tal</name>
    <name type="ordered locus">PputW619_1685</name>
</gene>